<sequence>MMMNKNVLSSILFFMLIGSVLVESRPLGLTKTEEKFVASLFDGLSLGSIKDSGPSPGEGHKVVDRKDTFRFVKHSGPSPSGPGH</sequence>
<feature type="signal peptide" evidence="2">
    <location>
        <begin position="1"/>
        <end position="24"/>
    </location>
</feature>
<feature type="chain" id="PRO_5009954975" description="PAMP-induced secreted peptide 2" evidence="2">
    <location>
        <begin position="25"/>
        <end position="84"/>
    </location>
</feature>
<feature type="region of interest" description="Disordered" evidence="3">
    <location>
        <begin position="50"/>
        <end position="84"/>
    </location>
</feature>
<feature type="compositionally biased region" description="Basic and acidic residues" evidence="3">
    <location>
        <begin position="58"/>
        <end position="70"/>
    </location>
</feature>
<feature type="modified residue" description="4-hydroxyproline" evidence="7">
    <location>
        <position position="77"/>
    </location>
</feature>
<feature type="modified residue" description="4-hydroxyproline" evidence="7">
    <location>
        <position position="79"/>
    </location>
</feature>
<organism>
    <name type="scientific">Arabidopsis thaliana</name>
    <name type="common">Mouse-ear cress</name>
    <dbReference type="NCBI Taxonomy" id="3702"/>
    <lineage>
        <taxon>Eukaryota</taxon>
        <taxon>Viridiplantae</taxon>
        <taxon>Streptophyta</taxon>
        <taxon>Embryophyta</taxon>
        <taxon>Tracheophyta</taxon>
        <taxon>Spermatophyta</taxon>
        <taxon>Magnoliopsida</taxon>
        <taxon>eudicotyledons</taxon>
        <taxon>Gunneridae</taxon>
        <taxon>Pentapetalae</taxon>
        <taxon>rosids</taxon>
        <taxon>malvids</taxon>
        <taxon>Brassicales</taxon>
        <taxon>Brassicaceae</taxon>
        <taxon>Camelineae</taxon>
        <taxon>Arabidopsis</taxon>
    </lineage>
</organism>
<name>PIP2_ARATH</name>
<comment type="function">
    <text evidence="4">Endogenous secreted peptide that acts as elicitor of immune response and positive regulator of defense response. Amplifies the immune response triggered by flg22, the active epitope of bacterial flagellin. Acts as a negative regulator of root growth.</text>
</comment>
<comment type="subcellular location">
    <subcellularLocation>
        <location evidence="1">Secreted</location>
        <location evidence="1">Extracellular space</location>
        <location evidence="1">Apoplast</location>
    </subcellularLocation>
</comment>
<comment type="PTM">
    <text evidence="7">Contains 4-hydroxyproline; hydroxylated on Pro-77 and Pro-79.</text>
</comment>
<comment type="sequence caution" evidence="6">
    <conflict type="erroneous initiation">
        <sequence resource="EMBL-CDS" id="AAM65691"/>
    </conflict>
    <text>Truncated N-terminus.</text>
</comment>
<comment type="sequence caution" evidence="6">
    <conflict type="erroneous initiation">
        <sequence resource="EMBL-CDS" id="CAB16755"/>
    </conflict>
    <text>Truncated N-terminus.</text>
</comment>
<comment type="sequence caution" evidence="6">
    <conflict type="erroneous initiation">
        <sequence resource="EMBL-CDS" id="CAB80395"/>
    </conflict>
    <text>Truncated N-terminus.</text>
</comment>
<keyword id="KW-0052">Apoplast</keyword>
<keyword id="KW-0379">Hydroxylation</keyword>
<keyword id="KW-1185">Reference proteome</keyword>
<keyword id="KW-0964">Secreted</keyword>
<keyword id="KW-0732">Signal</keyword>
<reference key="1">
    <citation type="journal article" date="1998" name="Nature">
        <title>Analysis of 1.9 Mb of contiguous sequence from chromosome 4 of Arabidopsis thaliana.</title>
        <authorList>
            <person name="Bevan M."/>
            <person name="Bancroft I."/>
            <person name="Bent E."/>
            <person name="Love K."/>
            <person name="Goodman H.M."/>
            <person name="Dean C."/>
            <person name="Bergkamp R."/>
            <person name="Dirkse W."/>
            <person name="van Staveren M."/>
            <person name="Stiekema W."/>
            <person name="Drost L."/>
            <person name="Ridley P."/>
            <person name="Hudson S.-A."/>
            <person name="Patel K."/>
            <person name="Murphy G."/>
            <person name="Piffanelli P."/>
            <person name="Wedler H."/>
            <person name="Wedler E."/>
            <person name="Wambutt R."/>
            <person name="Weitzenegger T."/>
            <person name="Pohl T."/>
            <person name="Terryn N."/>
            <person name="Gielen J."/>
            <person name="Villarroel R."/>
            <person name="De Clercq R."/>
            <person name="van Montagu M."/>
            <person name="Lecharny A."/>
            <person name="Aubourg S."/>
            <person name="Gy I."/>
            <person name="Kreis M."/>
            <person name="Lao N."/>
            <person name="Kavanagh T."/>
            <person name="Hempel S."/>
            <person name="Kotter P."/>
            <person name="Entian K.-D."/>
            <person name="Rieger M."/>
            <person name="Schaefer M."/>
            <person name="Funk B."/>
            <person name="Mueller-Auer S."/>
            <person name="Silvey M."/>
            <person name="James R."/>
            <person name="Monfort A."/>
            <person name="Pons A."/>
            <person name="Puigdomenech P."/>
            <person name="Douka A."/>
            <person name="Voukelatou E."/>
            <person name="Milioni D."/>
            <person name="Hatzopoulos P."/>
            <person name="Piravandi E."/>
            <person name="Obermaier B."/>
            <person name="Hilbert H."/>
            <person name="Duesterhoeft A."/>
            <person name="Moores T."/>
            <person name="Jones J.D.G."/>
            <person name="Eneva T."/>
            <person name="Palme K."/>
            <person name="Benes V."/>
            <person name="Rechmann S."/>
            <person name="Ansorge W."/>
            <person name="Cooke R."/>
            <person name="Berger C."/>
            <person name="Delseny M."/>
            <person name="Voet M."/>
            <person name="Volckaert G."/>
            <person name="Mewes H.-W."/>
            <person name="Klosterman S."/>
            <person name="Schueller C."/>
            <person name="Chalwatzis N."/>
        </authorList>
    </citation>
    <scope>NUCLEOTIDE SEQUENCE [LARGE SCALE GENOMIC DNA]</scope>
    <source>
        <strain>cv. Columbia</strain>
    </source>
</reference>
<reference key="2">
    <citation type="journal article" date="1999" name="Nature">
        <title>Sequence and analysis of chromosome 4 of the plant Arabidopsis thaliana.</title>
        <authorList>
            <person name="Mayer K.F.X."/>
            <person name="Schueller C."/>
            <person name="Wambutt R."/>
            <person name="Murphy G."/>
            <person name="Volckaert G."/>
            <person name="Pohl T."/>
            <person name="Duesterhoeft A."/>
            <person name="Stiekema W."/>
            <person name="Entian K.-D."/>
            <person name="Terryn N."/>
            <person name="Harris B."/>
            <person name="Ansorge W."/>
            <person name="Brandt P."/>
            <person name="Grivell L.A."/>
            <person name="Rieger M."/>
            <person name="Weichselgartner M."/>
            <person name="de Simone V."/>
            <person name="Obermaier B."/>
            <person name="Mache R."/>
            <person name="Mueller M."/>
            <person name="Kreis M."/>
            <person name="Delseny M."/>
            <person name="Puigdomenech P."/>
            <person name="Watson M."/>
            <person name="Schmidtheini T."/>
            <person name="Reichert B."/>
            <person name="Portetelle D."/>
            <person name="Perez-Alonso M."/>
            <person name="Boutry M."/>
            <person name="Bancroft I."/>
            <person name="Vos P."/>
            <person name="Hoheisel J."/>
            <person name="Zimmermann W."/>
            <person name="Wedler H."/>
            <person name="Ridley P."/>
            <person name="Langham S.-A."/>
            <person name="McCullagh B."/>
            <person name="Bilham L."/>
            <person name="Robben J."/>
            <person name="van der Schueren J."/>
            <person name="Grymonprez B."/>
            <person name="Chuang Y.-J."/>
            <person name="Vandenbussche F."/>
            <person name="Braeken M."/>
            <person name="Weltjens I."/>
            <person name="Voet M."/>
            <person name="Bastiaens I."/>
            <person name="Aert R."/>
            <person name="Defoor E."/>
            <person name="Weitzenegger T."/>
            <person name="Bothe G."/>
            <person name="Ramsperger U."/>
            <person name="Hilbert H."/>
            <person name="Braun M."/>
            <person name="Holzer E."/>
            <person name="Brandt A."/>
            <person name="Peters S."/>
            <person name="van Staveren M."/>
            <person name="Dirkse W."/>
            <person name="Mooijman P."/>
            <person name="Klein Lankhorst R."/>
            <person name="Rose M."/>
            <person name="Hauf J."/>
            <person name="Koetter P."/>
            <person name="Berneiser S."/>
            <person name="Hempel S."/>
            <person name="Feldpausch M."/>
            <person name="Lamberth S."/>
            <person name="Van den Daele H."/>
            <person name="De Keyser A."/>
            <person name="Buysshaert C."/>
            <person name="Gielen J."/>
            <person name="Villarroel R."/>
            <person name="De Clercq R."/>
            <person name="van Montagu M."/>
            <person name="Rogers J."/>
            <person name="Cronin A."/>
            <person name="Quail M.A."/>
            <person name="Bray-Allen S."/>
            <person name="Clark L."/>
            <person name="Doggett J."/>
            <person name="Hall S."/>
            <person name="Kay M."/>
            <person name="Lennard N."/>
            <person name="McLay K."/>
            <person name="Mayes R."/>
            <person name="Pettett A."/>
            <person name="Rajandream M.A."/>
            <person name="Lyne M."/>
            <person name="Benes V."/>
            <person name="Rechmann S."/>
            <person name="Borkova D."/>
            <person name="Bloecker H."/>
            <person name="Scharfe M."/>
            <person name="Grimm M."/>
            <person name="Loehnert T.-H."/>
            <person name="Dose S."/>
            <person name="de Haan M."/>
            <person name="Maarse A.C."/>
            <person name="Schaefer M."/>
            <person name="Mueller-Auer S."/>
            <person name="Gabel C."/>
            <person name="Fuchs M."/>
            <person name="Fartmann B."/>
            <person name="Granderath K."/>
            <person name="Dauner D."/>
            <person name="Herzl A."/>
            <person name="Neumann S."/>
            <person name="Argiriou A."/>
            <person name="Vitale D."/>
            <person name="Liguori R."/>
            <person name="Piravandi E."/>
            <person name="Massenet O."/>
            <person name="Quigley F."/>
            <person name="Clabauld G."/>
            <person name="Muendlein A."/>
            <person name="Felber R."/>
            <person name="Schnabl S."/>
            <person name="Hiller R."/>
            <person name="Schmidt W."/>
            <person name="Lecharny A."/>
            <person name="Aubourg S."/>
            <person name="Chefdor F."/>
            <person name="Cooke R."/>
            <person name="Berger C."/>
            <person name="Monfort A."/>
            <person name="Casacuberta E."/>
            <person name="Gibbons T."/>
            <person name="Weber N."/>
            <person name="Vandenbol M."/>
            <person name="Bargues M."/>
            <person name="Terol J."/>
            <person name="Torres A."/>
            <person name="Perez-Perez A."/>
            <person name="Purnelle B."/>
            <person name="Bent E."/>
            <person name="Johnson S."/>
            <person name="Tacon D."/>
            <person name="Jesse T."/>
            <person name="Heijnen L."/>
            <person name="Schwarz S."/>
            <person name="Scholler P."/>
            <person name="Heber S."/>
            <person name="Francs P."/>
            <person name="Bielke C."/>
            <person name="Frishman D."/>
            <person name="Haase D."/>
            <person name="Lemcke K."/>
            <person name="Mewes H.-W."/>
            <person name="Stocker S."/>
            <person name="Zaccaria P."/>
            <person name="Bevan M."/>
            <person name="Wilson R.K."/>
            <person name="de la Bastide M."/>
            <person name="Habermann K."/>
            <person name="Parnell L."/>
            <person name="Dedhia N."/>
            <person name="Gnoj L."/>
            <person name="Schutz K."/>
            <person name="Huang E."/>
            <person name="Spiegel L."/>
            <person name="Sekhon M."/>
            <person name="Murray J."/>
            <person name="Sheet P."/>
            <person name="Cordes M."/>
            <person name="Abu-Threideh J."/>
            <person name="Stoneking T."/>
            <person name="Kalicki J."/>
            <person name="Graves T."/>
            <person name="Harmon G."/>
            <person name="Edwards J."/>
            <person name="Latreille P."/>
            <person name="Courtney L."/>
            <person name="Cloud J."/>
            <person name="Abbott A."/>
            <person name="Scott K."/>
            <person name="Johnson D."/>
            <person name="Minx P."/>
            <person name="Bentley D."/>
            <person name="Fulton B."/>
            <person name="Miller N."/>
            <person name="Greco T."/>
            <person name="Kemp K."/>
            <person name="Kramer J."/>
            <person name="Fulton L."/>
            <person name="Mardis E."/>
            <person name="Dante M."/>
            <person name="Pepin K."/>
            <person name="Hillier L.W."/>
            <person name="Nelson J."/>
            <person name="Spieth J."/>
            <person name="Ryan E."/>
            <person name="Andrews S."/>
            <person name="Geisel C."/>
            <person name="Layman D."/>
            <person name="Du H."/>
            <person name="Ali J."/>
            <person name="Berghoff A."/>
            <person name="Jones K."/>
            <person name="Drone K."/>
            <person name="Cotton M."/>
            <person name="Joshu C."/>
            <person name="Antonoiu B."/>
            <person name="Zidanic M."/>
            <person name="Strong C."/>
            <person name="Sun H."/>
            <person name="Lamar B."/>
            <person name="Yordan C."/>
            <person name="Ma P."/>
            <person name="Zhong J."/>
            <person name="Preston R."/>
            <person name="Vil D."/>
            <person name="Shekher M."/>
            <person name="Matero A."/>
            <person name="Shah R."/>
            <person name="Swaby I.K."/>
            <person name="O'Shaughnessy A."/>
            <person name="Rodriguez M."/>
            <person name="Hoffman J."/>
            <person name="Till S."/>
            <person name="Granat S."/>
            <person name="Shohdy N."/>
            <person name="Hasegawa A."/>
            <person name="Hameed A."/>
            <person name="Lodhi M."/>
            <person name="Johnson A."/>
            <person name="Chen E."/>
            <person name="Marra M.A."/>
            <person name="Martienssen R."/>
            <person name="McCombie W.R."/>
        </authorList>
    </citation>
    <scope>NUCLEOTIDE SEQUENCE [LARGE SCALE GENOMIC DNA]</scope>
    <source>
        <strain>cv. Columbia</strain>
    </source>
</reference>
<reference key="3">
    <citation type="journal article" date="2017" name="Plant J.">
        <title>Araport11: a complete reannotation of the Arabidopsis thaliana reference genome.</title>
        <authorList>
            <person name="Cheng C.Y."/>
            <person name="Krishnakumar V."/>
            <person name="Chan A.P."/>
            <person name="Thibaud-Nissen F."/>
            <person name="Schobel S."/>
            <person name="Town C.D."/>
        </authorList>
    </citation>
    <scope>GENOME REANNOTATION</scope>
    <source>
        <strain>cv. Columbia</strain>
    </source>
</reference>
<reference key="4">
    <citation type="submission" date="2002-03" db="EMBL/GenBank/DDBJ databases">
        <title>Full-length cDNA from Arabidopsis thaliana.</title>
        <authorList>
            <person name="Brover V.V."/>
            <person name="Troukhan M.E."/>
            <person name="Alexandrov N.A."/>
            <person name="Lu Y.-P."/>
            <person name="Flavell R.B."/>
            <person name="Feldmann K.A."/>
        </authorList>
    </citation>
    <scope>NUCLEOTIDE SEQUENCE [LARGE SCALE MRNA]</scope>
</reference>
<reference key="5">
    <citation type="journal article" date="2014" name="PLoS Pathog.">
        <title>The secreted peptide PIP1 amplifies immunity through receptor-like kinase 7.</title>
        <authorList>
            <person name="Hou S."/>
            <person name="Wang X."/>
            <person name="Chen D."/>
            <person name="Yang X."/>
            <person name="Wang M."/>
            <person name="Turra D."/>
            <person name="Di Pietro A."/>
            <person name="Zhang W."/>
        </authorList>
    </citation>
    <scope>FUNCTION</scope>
    <scope>HYDROXYLATION AT PRO-77 AND PRO-79</scope>
</reference>
<evidence type="ECO:0000250" key="1">
    <source>
        <dbReference type="UniProtKB" id="Q1PE40"/>
    </source>
</evidence>
<evidence type="ECO:0000255" key="2"/>
<evidence type="ECO:0000256" key="3">
    <source>
        <dbReference type="SAM" id="MobiDB-lite"/>
    </source>
</evidence>
<evidence type="ECO:0000269" key="4">
    <source>
    </source>
</evidence>
<evidence type="ECO:0000303" key="5">
    <source>
    </source>
</evidence>
<evidence type="ECO:0000305" key="6"/>
<evidence type="ECO:0000305" key="7">
    <source>
    </source>
</evidence>
<evidence type="ECO:0000312" key="8">
    <source>
        <dbReference type="Araport" id="AT4G37290"/>
    </source>
</evidence>
<evidence type="ECO:0000312" key="9">
    <source>
        <dbReference type="EMBL" id="CAB16755.1"/>
    </source>
</evidence>
<gene>
    <name evidence="5" type="primary">PIP2</name>
    <name evidence="8" type="ordered locus">At4g37290</name>
    <name evidence="9" type="ORF">C7A10.70</name>
</gene>
<accession>F4JRC5</accession>
<accession>O23158</accession>
<accession>Q8L9Y5</accession>
<dbReference type="EMBL" id="Z99707">
    <property type="protein sequence ID" value="CAB16755.1"/>
    <property type="status" value="ALT_INIT"/>
    <property type="molecule type" value="Genomic_DNA"/>
</dbReference>
<dbReference type="EMBL" id="AL161591">
    <property type="protein sequence ID" value="CAB80395.1"/>
    <property type="status" value="ALT_INIT"/>
    <property type="molecule type" value="Genomic_DNA"/>
</dbReference>
<dbReference type="EMBL" id="CP002687">
    <property type="protein sequence ID" value="AEE86777.1"/>
    <property type="molecule type" value="Genomic_DNA"/>
</dbReference>
<dbReference type="EMBL" id="AY088146">
    <property type="protein sequence ID" value="AAM65691.1"/>
    <property type="status" value="ALT_INIT"/>
    <property type="molecule type" value="mRNA"/>
</dbReference>
<dbReference type="PIR" id="F85440">
    <property type="entry name" value="F85440"/>
</dbReference>
<dbReference type="RefSeq" id="NP_568022.1">
    <property type="nucleotide sequence ID" value="NM_119892.2"/>
</dbReference>
<dbReference type="STRING" id="3702.F4JRC5"/>
<dbReference type="PaxDb" id="3702-AT4G37290.1"/>
<dbReference type="EnsemblPlants" id="AT4G37290.1">
    <property type="protein sequence ID" value="AT4G37290.1"/>
    <property type="gene ID" value="AT4G37290"/>
</dbReference>
<dbReference type="GeneID" id="829883"/>
<dbReference type="Gramene" id="AT4G37290.1">
    <property type="protein sequence ID" value="AT4G37290.1"/>
    <property type="gene ID" value="AT4G37290"/>
</dbReference>
<dbReference type="KEGG" id="ath:AT4G37290"/>
<dbReference type="Araport" id="AT4G37290"/>
<dbReference type="TAIR" id="AT4G37290">
    <property type="gene designation" value="PREPIP2"/>
</dbReference>
<dbReference type="eggNOG" id="ENOG502RRHB">
    <property type="taxonomic scope" value="Eukaryota"/>
</dbReference>
<dbReference type="HOGENOM" id="CLU_2515718_0_0_1"/>
<dbReference type="InParanoid" id="F4JRC5"/>
<dbReference type="OMA" id="MMMINKA"/>
<dbReference type="OrthoDB" id="1936010at2759"/>
<dbReference type="PRO" id="PR:F4JRC5"/>
<dbReference type="Proteomes" id="UP000006548">
    <property type="component" value="Chromosome 4"/>
</dbReference>
<dbReference type="ExpressionAtlas" id="F4JRC5">
    <property type="expression patterns" value="baseline and differential"/>
</dbReference>
<dbReference type="GO" id="GO:0048046">
    <property type="term" value="C:apoplast"/>
    <property type="evidence" value="ECO:0000314"/>
    <property type="project" value="TAIR"/>
</dbReference>
<dbReference type="GO" id="GO:0045087">
    <property type="term" value="P:innate immune response"/>
    <property type="evidence" value="ECO:0000315"/>
    <property type="project" value="UniProtKB"/>
</dbReference>
<dbReference type="GO" id="GO:2000280">
    <property type="term" value="P:regulation of root development"/>
    <property type="evidence" value="ECO:0000315"/>
    <property type="project" value="UniProtKB"/>
</dbReference>
<dbReference type="GO" id="GO:0009733">
    <property type="term" value="P:response to auxin"/>
    <property type="evidence" value="ECO:0000270"/>
    <property type="project" value="TAIR"/>
</dbReference>
<dbReference type="InterPro" id="IPR044700">
    <property type="entry name" value="PIP2/PIPL1"/>
</dbReference>
<dbReference type="PANTHER" id="PTHR34663">
    <property type="entry name" value="OS06G0637400 PROTEIN"/>
    <property type="match status" value="1"/>
</dbReference>
<dbReference type="PANTHER" id="PTHR34663:SF10">
    <property type="entry name" value="PAMP-INDUCED SECRETED PEPTIDE 2"/>
    <property type="match status" value="1"/>
</dbReference>
<protein>
    <recommendedName>
        <fullName evidence="5">PAMP-induced secreted peptide 2</fullName>
    </recommendedName>
</protein>
<proteinExistence type="evidence at protein level"/>